<proteinExistence type="inferred from homology"/>
<protein>
    <recommendedName>
        <fullName evidence="1">dITP/XTP pyrophosphatase</fullName>
        <ecNumber evidence="1">3.6.1.66</ecNumber>
    </recommendedName>
    <alternativeName>
        <fullName evidence="1">Non-canonical purine NTP pyrophosphatase</fullName>
    </alternativeName>
    <alternativeName>
        <fullName evidence="1">Non-standard purine NTP pyrophosphatase</fullName>
    </alternativeName>
    <alternativeName>
        <fullName evidence="1">Nucleoside-triphosphate diphosphatase</fullName>
    </alternativeName>
    <alternativeName>
        <fullName evidence="1">Nucleoside-triphosphate pyrophosphatase</fullName>
        <shortName evidence="1">NTPase</shortName>
    </alternativeName>
</protein>
<comment type="function">
    <text evidence="1">Pyrophosphatase that catalyzes the hydrolysis of nucleoside triphosphates to their monophosphate derivatives, with a high preference for the non-canonical purine nucleotides XTP (xanthosine triphosphate), dITP (deoxyinosine triphosphate) and ITP. Seems to function as a house-cleaning enzyme that removes non-canonical purine nucleotides from the nucleotide pool, thus preventing their incorporation into DNA/RNA and avoiding chromosomal lesions.</text>
</comment>
<comment type="catalytic activity">
    <reaction evidence="1">
        <text>XTP + H2O = XMP + diphosphate + H(+)</text>
        <dbReference type="Rhea" id="RHEA:28610"/>
        <dbReference type="ChEBI" id="CHEBI:15377"/>
        <dbReference type="ChEBI" id="CHEBI:15378"/>
        <dbReference type="ChEBI" id="CHEBI:33019"/>
        <dbReference type="ChEBI" id="CHEBI:57464"/>
        <dbReference type="ChEBI" id="CHEBI:61314"/>
        <dbReference type="EC" id="3.6.1.66"/>
    </reaction>
</comment>
<comment type="catalytic activity">
    <reaction evidence="1">
        <text>dITP + H2O = dIMP + diphosphate + H(+)</text>
        <dbReference type="Rhea" id="RHEA:28342"/>
        <dbReference type="ChEBI" id="CHEBI:15377"/>
        <dbReference type="ChEBI" id="CHEBI:15378"/>
        <dbReference type="ChEBI" id="CHEBI:33019"/>
        <dbReference type="ChEBI" id="CHEBI:61194"/>
        <dbReference type="ChEBI" id="CHEBI:61382"/>
        <dbReference type="EC" id="3.6.1.66"/>
    </reaction>
</comment>
<comment type="catalytic activity">
    <reaction evidence="1">
        <text>ITP + H2O = IMP + diphosphate + H(+)</text>
        <dbReference type="Rhea" id="RHEA:29399"/>
        <dbReference type="ChEBI" id="CHEBI:15377"/>
        <dbReference type="ChEBI" id="CHEBI:15378"/>
        <dbReference type="ChEBI" id="CHEBI:33019"/>
        <dbReference type="ChEBI" id="CHEBI:58053"/>
        <dbReference type="ChEBI" id="CHEBI:61402"/>
        <dbReference type="EC" id="3.6.1.66"/>
    </reaction>
</comment>
<comment type="cofactor">
    <cofactor evidence="1">
        <name>Mg(2+)</name>
        <dbReference type="ChEBI" id="CHEBI:18420"/>
    </cofactor>
    <text evidence="1">Binds 1 Mg(2+) ion per subunit.</text>
</comment>
<comment type="subunit">
    <text evidence="1">Homodimer.</text>
</comment>
<comment type="similarity">
    <text evidence="1">Belongs to the HAM1 NTPase family.</text>
</comment>
<reference key="1">
    <citation type="journal article" date="2004" name="Nucleic Acids Res.">
        <title>Whole genome comparisons of serotype 4b and 1/2a strains of the food-borne pathogen Listeria monocytogenes reveal new insights into the core genome components of this species.</title>
        <authorList>
            <person name="Nelson K.E."/>
            <person name="Fouts D.E."/>
            <person name="Mongodin E.F."/>
            <person name="Ravel J."/>
            <person name="DeBoy R.T."/>
            <person name="Kolonay J.F."/>
            <person name="Rasko D.A."/>
            <person name="Angiuoli S.V."/>
            <person name="Gill S.R."/>
            <person name="Paulsen I.T."/>
            <person name="Peterson J.D."/>
            <person name="White O."/>
            <person name="Nelson W.C."/>
            <person name="Nierman W.C."/>
            <person name="Beanan M.J."/>
            <person name="Brinkac L.M."/>
            <person name="Daugherty S.C."/>
            <person name="Dodson R.J."/>
            <person name="Durkin A.S."/>
            <person name="Madupu R."/>
            <person name="Haft D.H."/>
            <person name="Selengut J."/>
            <person name="Van Aken S.E."/>
            <person name="Khouri H.M."/>
            <person name="Fedorova N."/>
            <person name="Forberger H.A."/>
            <person name="Tran B."/>
            <person name="Kathariou S."/>
            <person name="Wonderling L.D."/>
            <person name="Uhlich G.A."/>
            <person name="Bayles D.O."/>
            <person name="Luchansky J.B."/>
            <person name="Fraser C.M."/>
        </authorList>
    </citation>
    <scope>NUCLEOTIDE SEQUENCE [LARGE SCALE GENOMIC DNA]</scope>
    <source>
        <strain>F2365</strain>
    </source>
</reference>
<organism>
    <name type="scientific">Listeria monocytogenes serotype 4b (strain F2365)</name>
    <dbReference type="NCBI Taxonomy" id="265669"/>
    <lineage>
        <taxon>Bacteria</taxon>
        <taxon>Bacillati</taxon>
        <taxon>Bacillota</taxon>
        <taxon>Bacilli</taxon>
        <taxon>Bacillales</taxon>
        <taxon>Listeriaceae</taxon>
        <taxon>Listeria</taxon>
    </lineage>
</organism>
<evidence type="ECO:0000255" key="1">
    <source>
        <dbReference type="HAMAP-Rule" id="MF_01405"/>
    </source>
</evidence>
<dbReference type="EC" id="3.6.1.66" evidence="1"/>
<dbReference type="EMBL" id="AE017262">
    <property type="protein sequence ID" value="AAT04024.1"/>
    <property type="molecule type" value="Genomic_DNA"/>
</dbReference>
<dbReference type="RefSeq" id="WP_003726033.1">
    <property type="nucleotide sequence ID" value="NC_002973.6"/>
</dbReference>
<dbReference type="SMR" id="Q720J0"/>
<dbReference type="KEGG" id="lmf:LMOf2365_1248"/>
<dbReference type="HOGENOM" id="CLU_082080_0_2_9"/>
<dbReference type="GO" id="GO:0005829">
    <property type="term" value="C:cytosol"/>
    <property type="evidence" value="ECO:0007669"/>
    <property type="project" value="TreeGrafter"/>
</dbReference>
<dbReference type="GO" id="GO:0035870">
    <property type="term" value="F:dITP diphosphatase activity"/>
    <property type="evidence" value="ECO:0007669"/>
    <property type="project" value="RHEA"/>
</dbReference>
<dbReference type="GO" id="GO:0036220">
    <property type="term" value="F:ITP diphosphatase activity"/>
    <property type="evidence" value="ECO:0007669"/>
    <property type="project" value="UniProtKB-EC"/>
</dbReference>
<dbReference type="GO" id="GO:0046872">
    <property type="term" value="F:metal ion binding"/>
    <property type="evidence" value="ECO:0007669"/>
    <property type="project" value="UniProtKB-KW"/>
</dbReference>
<dbReference type="GO" id="GO:0000166">
    <property type="term" value="F:nucleotide binding"/>
    <property type="evidence" value="ECO:0007669"/>
    <property type="project" value="UniProtKB-KW"/>
</dbReference>
<dbReference type="GO" id="GO:0017111">
    <property type="term" value="F:ribonucleoside triphosphate phosphatase activity"/>
    <property type="evidence" value="ECO:0007669"/>
    <property type="project" value="InterPro"/>
</dbReference>
<dbReference type="GO" id="GO:0036222">
    <property type="term" value="F:XTP diphosphatase activity"/>
    <property type="evidence" value="ECO:0007669"/>
    <property type="project" value="RHEA"/>
</dbReference>
<dbReference type="GO" id="GO:0009117">
    <property type="term" value="P:nucleotide metabolic process"/>
    <property type="evidence" value="ECO:0007669"/>
    <property type="project" value="UniProtKB-KW"/>
</dbReference>
<dbReference type="GO" id="GO:0009146">
    <property type="term" value="P:purine nucleoside triphosphate catabolic process"/>
    <property type="evidence" value="ECO:0007669"/>
    <property type="project" value="UniProtKB-UniRule"/>
</dbReference>
<dbReference type="CDD" id="cd00515">
    <property type="entry name" value="HAM1"/>
    <property type="match status" value="1"/>
</dbReference>
<dbReference type="FunFam" id="3.90.950.10:FF:000001">
    <property type="entry name" value="dITP/XTP pyrophosphatase"/>
    <property type="match status" value="1"/>
</dbReference>
<dbReference type="Gene3D" id="3.90.950.10">
    <property type="match status" value="1"/>
</dbReference>
<dbReference type="HAMAP" id="MF_01405">
    <property type="entry name" value="Non_canon_purine_NTPase"/>
    <property type="match status" value="1"/>
</dbReference>
<dbReference type="InterPro" id="IPR020922">
    <property type="entry name" value="dITP/XTP_pyrophosphatase"/>
</dbReference>
<dbReference type="InterPro" id="IPR029001">
    <property type="entry name" value="ITPase-like_fam"/>
</dbReference>
<dbReference type="InterPro" id="IPR002637">
    <property type="entry name" value="RdgB/HAM1"/>
</dbReference>
<dbReference type="NCBIfam" id="NF011397">
    <property type="entry name" value="PRK14822.1"/>
    <property type="match status" value="1"/>
</dbReference>
<dbReference type="NCBIfam" id="TIGR00042">
    <property type="entry name" value="RdgB/HAM1 family non-canonical purine NTP pyrophosphatase"/>
    <property type="match status" value="1"/>
</dbReference>
<dbReference type="PANTHER" id="PTHR11067:SF9">
    <property type="entry name" value="INOSINE TRIPHOSPHATE PYROPHOSPHATASE"/>
    <property type="match status" value="1"/>
</dbReference>
<dbReference type="PANTHER" id="PTHR11067">
    <property type="entry name" value="INOSINE TRIPHOSPHATE PYROPHOSPHATASE/HAM1 PROTEIN"/>
    <property type="match status" value="1"/>
</dbReference>
<dbReference type="Pfam" id="PF01725">
    <property type="entry name" value="Ham1p_like"/>
    <property type="match status" value="1"/>
</dbReference>
<dbReference type="SUPFAM" id="SSF52972">
    <property type="entry name" value="ITPase-like"/>
    <property type="match status" value="1"/>
</dbReference>
<feature type="chain" id="PRO_0000178188" description="dITP/XTP pyrophosphatase">
    <location>
        <begin position="1"/>
        <end position="203"/>
    </location>
</feature>
<feature type="active site" description="Proton acceptor" evidence="1">
    <location>
        <position position="70"/>
    </location>
</feature>
<feature type="binding site" evidence="1">
    <location>
        <begin position="8"/>
        <end position="13"/>
    </location>
    <ligand>
        <name>substrate</name>
    </ligand>
</feature>
<feature type="binding site" evidence="1">
    <location>
        <position position="41"/>
    </location>
    <ligand>
        <name>Mg(2+)</name>
        <dbReference type="ChEBI" id="CHEBI:18420"/>
    </ligand>
</feature>
<feature type="binding site" evidence="1">
    <location>
        <position position="70"/>
    </location>
    <ligand>
        <name>Mg(2+)</name>
        <dbReference type="ChEBI" id="CHEBI:18420"/>
    </ligand>
</feature>
<feature type="binding site" evidence="1">
    <location>
        <position position="71"/>
    </location>
    <ligand>
        <name>substrate</name>
    </ligand>
</feature>
<feature type="binding site" evidence="1">
    <location>
        <begin position="153"/>
        <end position="156"/>
    </location>
    <ligand>
        <name>substrate</name>
    </ligand>
</feature>
<feature type="binding site" evidence="1">
    <location>
        <position position="176"/>
    </location>
    <ligand>
        <name>substrate</name>
    </ligand>
</feature>
<feature type="binding site" evidence="1">
    <location>
        <begin position="181"/>
        <end position="182"/>
    </location>
    <ligand>
        <name>substrate</name>
    </ligand>
</feature>
<sequence length="203" mass="21970">MSKIIIATANKGKAKEFEKIFAKFNIEVATLADFPEIGEIEETGTTFAENAALKAETVASVLNQTVIADDSGLIVDALDGAPGVYSARYAGIAHDDAKNNEKLLKNLEGVEPDKRTARFHCTLAVATPSEKTSFYTGEVEGVIAEQLCGTNGFGYDPLFFLPEFGLTMAEIPAEKKNEISHRANAIKQLEKDLAEVVEKVTKK</sequence>
<gene>
    <name type="ordered locus">LMOf2365_1248</name>
</gene>
<name>IXTPA_LISMF</name>
<keyword id="KW-0378">Hydrolase</keyword>
<keyword id="KW-0460">Magnesium</keyword>
<keyword id="KW-0479">Metal-binding</keyword>
<keyword id="KW-0546">Nucleotide metabolism</keyword>
<keyword id="KW-0547">Nucleotide-binding</keyword>
<accession>Q720J0</accession>